<keyword id="KW-0903">Direct protein sequencing</keyword>
<keyword id="KW-1015">Disulfide bond</keyword>
<keyword id="KW-0325">Glycoprotein</keyword>
<keyword id="KW-0333">Golgi apparatus</keyword>
<keyword id="KW-0378">Hydrolase</keyword>
<keyword id="KW-0472">Membrane</keyword>
<keyword id="KW-0511">Multifunctional enzyme</keyword>
<keyword id="KW-1185">Reference proteome</keyword>
<keyword id="KW-0735">Signal-anchor</keyword>
<keyword id="KW-0808">Transferase</keyword>
<keyword id="KW-0812">Transmembrane</keyword>
<keyword id="KW-1133">Transmembrane helix</keyword>
<proteinExistence type="evidence at protein level"/>
<sequence length="883" mass="101202">MLQLWKVVRPARQLELHRLILLLIGFSLVSMGFLAYYVSTSPKAKEPLPLPLGDCSSSGAAGPGPARPPVPPRPQRPPETTRTEPVVLVFVESAYSQLGQEIVAILESSRFRYSTELAPGRGDMPTLTDHTHGRYVLVIYENLLKYVNLDAWSRELLDRYCVEYGVGIIGFFRAREHSLLSAQLKGFPLFLHSNLGLRDYQVNPSAPLLHLTRPSRLEPGPLPGDDWTIFQSNHSTYEPVLIASHRPAELSMPGPVLRRARLPTVVQDLGLHDGIQRVLFGHGLSFWLHKLVFVDAVAYLTGKRLCLDLDRYILVDIDDIFVGKEGTRMKVADVEALLTTQNKLRTLVPNFTFNLGFSGKFYHTGTEEEDAGDDMLLKHRREFWWFPHMWSHMQPHLFHNRSVLADQMRLNKQFALEHGIPTDLGYAVAPHHSGVYPIHSQLYEAWKSVWGIQVTSTEEYPHLRPARYRRGFIHNGIMVLPRQTCGLFTHTIFYNEYPGGSRELDRSIRGGELFLTVLLNPISVFMTHLSNYGNDRLGLYTFESLVRFLQCWTRLRLQTLPPVPLAQKYFELFPQERSPLWQNPCDDKRHKDIWSKEKTCDRLPKFLIVGPQKTGTTAIHFFLSLHPAVTSSFPSPSTFEEIQFFNGPNYHKGIDWYMDFFPVPSNASTDFLFEKSATYFDSEVVPRRGAALLPRAKIITVLINPADRAYSWYQHQRAHGDPIALNYTFYQVISASSQAPLLLRSLQNRCLVPGYYSTHLQRWLTYYPSGQLLIMDGQELRVNPAASMEIIQKFLGITPFLNYTRTLRFDEDKGFWCQGLEGGKTRCLGRSKGRRYPDMDMESRLFLTDFFRNHNLELSKLLSRLGQPAPLWLREELQHSSVG</sequence>
<feature type="chain" id="PRO_0000085213" description="Bifunctional heparan sulfate N-deacetylase/N-sulfotransferase 2">
    <location>
        <begin position="1"/>
        <end position="883"/>
    </location>
</feature>
<feature type="topological domain" description="Cytoplasmic" evidence="3">
    <location>
        <begin position="1"/>
        <end position="18"/>
    </location>
</feature>
<feature type="transmembrane region" description="Helical; Signal-anchor for type II membrane protein" evidence="3">
    <location>
        <begin position="19"/>
        <end position="39"/>
    </location>
</feature>
<feature type="topological domain" description="Lumenal" evidence="3">
    <location>
        <begin position="40"/>
        <end position="883"/>
    </location>
</feature>
<feature type="region of interest" description="Heparan sulfate N-deacetylase 2">
    <location>
        <begin position="41"/>
        <end position="597"/>
    </location>
</feature>
<feature type="region of interest" description="Disordered" evidence="4">
    <location>
        <begin position="49"/>
        <end position="82"/>
    </location>
</feature>
<feature type="region of interest" description="Heparan sulfate N-sulfotransferase 2">
    <location>
        <begin position="598"/>
        <end position="883"/>
    </location>
</feature>
<feature type="compositionally biased region" description="Pro residues" evidence="4">
    <location>
        <begin position="65"/>
        <end position="77"/>
    </location>
</feature>
<feature type="active site" description="For sulfotransferase activity" evidence="1">
    <location>
        <position position="613"/>
    </location>
</feature>
<feature type="binding site" evidence="1">
    <location>
        <begin position="613"/>
        <end position="617"/>
    </location>
    <ligand>
        <name>3'-phosphoadenylyl sulfate</name>
        <dbReference type="ChEBI" id="CHEBI:58339"/>
    </ligand>
</feature>
<feature type="binding site" evidence="1">
    <location>
        <position position="711"/>
    </location>
    <ligand>
        <name>3'-phosphoadenylyl sulfate</name>
        <dbReference type="ChEBI" id="CHEBI:58339"/>
    </ligand>
</feature>
<feature type="binding site" evidence="1">
    <location>
        <begin position="832"/>
        <end position="836"/>
    </location>
    <ligand>
        <name>3'-phosphoadenylyl sulfate</name>
        <dbReference type="ChEBI" id="CHEBI:58339"/>
    </ligand>
</feature>
<feature type="glycosylation site" description="N-linked (GlcNAc...) asparagine" evidence="3">
    <location>
        <position position="233"/>
    </location>
</feature>
<feature type="glycosylation site" description="N-linked (GlcNAc...) asparagine" evidence="3">
    <location>
        <position position="350"/>
    </location>
</feature>
<feature type="glycosylation site" description="N-linked (GlcNAc...) asparagine" evidence="3">
    <location>
        <position position="400"/>
    </location>
</feature>
<feature type="glycosylation site" description="N-linked (GlcNAc...) asparagine" evidence="3">
    <location>
        <position position="666"/>
    </location>
</feature>
<feature type="glycosylation site" description="N-linked (GlcNAc...) asparagine" evidence="3">
    <location>
        <position position="726"/>
    </location>
</feature>
<feature type="glycosylation site" description="N-linked (GlcNAc...) asparagine" evidence="3">
    <location>
        <position position="802"/>
    </location>
</feature>
<feature type="disulfide bond" evidence="1">
    <location>
        <begin position="817"/>
        <end position="827"/>
    </location>
</feature>
<feature type="sequence conflict" description="In Ref. 2; CAA53479." evidence="7" ref="2">
    <original>A</original>
    <variation>V</variation>
    <location>
        <position position="118"/>
    </location>
</feature>
<feature type="sequence conflict" description="In Ref. 2; CAA53479." evidence="7" ref="2">
    <location>
        <position position="396"/>
    </location>
</feature>
<feature type="sequence conflict" description="In Ref. 4; BAE29307." evidence="7" ref="4">
    <original>P</original>
    <variation>L</variation>
    <location>
        <position position="461"/>
    </location>
</feature>
<comment type="function">
    <text evidence="2 5 6">Essential bifunctional enzyme that catalyzes both the N-deacetylation and the N-sulfation of glucosamine (GlcNAc) of the glycosaminoglycan in heparan sulfate. Modifies the GlcNAc-GlcA disaccharide repeating sugar backbone to make N-sulfated heparosan, a prerequisite substrate for later modifications in heparin biosynthesis. Plays a role in determining the extent and pattern of sulfation of heparan sulfate. Required for the exosomal release of SDCBP, CD63 and syndecan (By similarity).</text>
</comment>
<comment type="catalytic activity">
    <reaction>
        <text>alpha-D-glucosaminyl-[heparan sulfate](n) + 3'-phosphoadenylyl sulfate = N-sulfo-alpha-D-glucosaminyl-[heparan sulfate](n) + adenosine 3',5'-bisphosphate + 2 H(+)</text>
        <dbReference type="Rhea" id="RHEA:21980"/>
        <dbReference type="Rhea" id="RHEA-COMP:9830"/>
        <dbReference type="Rhea" id="RHEA-COMP:14602"/>
        <dbReference type="ChEBI" id="CHEBI:15378"/>
        <dbReference type="ChEBI" id="CHEBI:58339"/>
        <dbReference type="ChEBI" id="CHEBI:58343"/>
        <dbReference type="ChEBI" id="CHEBI:58388"/>
        <dbReference type="ChEBI" id="CHEBI:140572"/>
        <dbReference type="EC" id="2.8.2.8"/>
    </reaction>
</comment>
<comment type="pathway">
    <text>Glycan metabolism; heparan sulfate biosynthesis.</text>
</comment>
<comment type="pathway">
    <text>Glycan metabolism; heparin biosynthesis.</text>
</comment>
<comment type="subunit">
    <text evidence="1">Monomer.</text>
</comment>
<comment type="subcellular location">
    <subcellularLocation>
        <location evidence="1">Golgi apparatus membrane</location>
        <topology evidence="1">Single-pass type II membrane protein</topology>
    </subcellularLocation>
</comment>
<comment type="tissue specificity">
    <text>Widely expressed in adult and throughout development.</text>
</comment>
<comment type="disruption phenotype">
    <text evidence="5 6">Mice are viable and fertile but have fewer connective-tissue-type mast cells; mast cells that remain having an altered morphology and severely reduced amounts of stored histamine and mast cell proteases.</text>
</comment>
<comment type="miscellaneous">
    <text>The presence of 4 different heparan sulfate N-deacetylase/N-sulfotransferase enzymes in mammals, as well as differences in their enzyme activity suggest that some initiate heparan sulfate modification/sulfation reactions, whereas other later on fill in or extend already modified heparan sulfate sequences.</text>
</comment>
<comment type="similarity">
    <text evidence="7">Belongs to the sulfotransferase 1 family. NDST subfamily.</text>
</comment>
<accession>P52850</accession>
<accession>Q3UDF4</accession>
<accession>Q549P5</accession>
<organism>
    <name type="scientific">Mus musculus</name>
    <name type="common">Mouse</name>
    <dbReference type="NCBI Taxonomy" id="10090"/>
    <lineage>
        <taxon>Eukaryota</taxon>
        <taxon>Metazoa</taxon>
        <taxon>Chordata</taxon>
        <taxon>Craniata</taxon>
        <taxon>Vertebrata</taxon>
        <taxon>Euteleostomi</taxon>
        <taxon>Mammalia</taxon>
        <taxon>Eutheria</taxon>
        <taxon>Euarchontoglires</taxon>
        <taxon>Glires</taxon>
        <taxon>Rodentia</taxon>
        <taxon>Myomorpha</taxon>
        <taxon>Muroidea</taxon>
        <taxon>Muridae</taxon>
        <taxon>Murinae</taxon>
        <taxon>Mus</taxon>
        <taxon>Mus</taxon>
    </lineage>
</organism>
<dbReference type="EC" id="2.8.2.8"/>
<dbReference type="EC" id="3.-.-.-"/>
<dbReference type="EC" id="2.8.2.-"/>
<dbReference type="EMBL" id="U02304">
    <property type="protein sequence ID" value="AAC52137.1"/>
    <property type="molecule type" value="mRNA"/>
</dbReference>
<dbReference type="EMBL" id="X75885">
    <property type="protein sequence ID" value="CAA53479.1"/>
    <property type="molecule type" value="mRNA"/>
</dbReference>
<dbReference type="EMBL" id="AF074925">
    <property type="protein sequence ID" value="AAD15979.1"/>
    <property type="molecule type" value="mRNA"/>
</dbReference>
<dbReference type="EMBL" id="AK150100">
    <property type="protein sequence ID" value="BAE29307.1"/>
    <property type="molecule type" value="mRNA"/>
</dbReference>
<dbReference type="EMBL" id="BC110480">
    <property type="protein sequence ID" value="AAI10481.1"/>
    <property type="molecule type" value="mRNA"/>
</dbReference>
<dbReference type="CCDS" id="CCDS26854.1"/>
<dbReference type="PIR" id="A49733">
    <property type="entry name" value="A49733"/>
</dbReference>
<dbReference type="RefSeq" id="NP_034941.2">
    <property type="nucleotide sequence ID" value="NM_010811.2"/>
</dbReference>
<dbReference type="SMR" id="P52850"/>
<dbReference type="FunCoup" id="P52850">
    <property type="interactions" value="1902"/>
</dbReference>
<dbReference type="STRING" id="10090.ENSMUSP00000153036"/>
<dbReference type="GlyCosmos" id="P52850">
    <property type="glycosylation" value="6 sites, No reported glycans"/>
</dbReference>
<dbReference type="GlyGen" id="P52850">
    <property type="glycosylation" value="6 sites"/>
</dbReference>
<dbReference type="iPTMnet" id="P52850"/>
<dbReference type="PhosphoSitePlus" id="P52850"/>
<dbReference type="PaxDb" id="10090-ENSMUSP00000040227"/>
<dbReference type="ProteomicsDB" id="253041"/>
<dbReference type="Pumba" id="P52850"/>
<dbReference type="DNASU" id="17423"/>
<dbReference type="Ensembl" id="ENSMUST00000047490.6">
    <property type="protein sequence ID" value="ENSMUSP00000040227.6"/>
    <property type="gene ID" value="ENSMUSG00000039308.7"/>
</dbReference>
<dbReference type="Ensembl" id="ENSMUST00000223679.2">
    <property type="protein sequence ID" value="ENSMUSP00000153036.2"/>
    <property type="gene ID" value="ENSMUSG00000039308.7"/>
</dbReference>
<dbReference type="Ensembl" id="ENSMUST00000225000.2">
    <property type="protein sequence ID" value="ENSMUSP00000153141.2"/>
    <property type="gene ID" value="ENSMUSG00000039308.7"/>
</dbReference>
<dbReference type="GeneID" id="17423"/>
<dbReference type="KEGG" id="mmu:17423"/>
<dbReference type="UCSC" id="uc007sks.1">
    <property type="organism name" value="mouse"/>
</dbReference>
<dbReference type="AGR" id="MGI:97040"/>
<dbReference type="CTD" id="8509"/>
<dbReference type="MGI" id="MGI:97040">
    <property type="gene designation" value="Ndst2"/>
</dbReference>
<dbReference type="VEuPathDB" id="HostDB:ENSMUSG00000039308"/>
<dbReference type="eggNOG" id="KOG3703">
    <property type="taxonomic scope" value="Eukaryota"/>
</dbReference>
<dbReference type="GeneTree" id="ENSGT00940000156237"/>
<dbReference type="HOGENOM" id="CLU_011357_2_0_1"/>
<dbReference type="InParanoid" id="P52850"/>
<dbReference type="OMA" id="GLKFWLH"/>
<dbReference type="OrthoDB" id="8958249at2759"/>
<dbReference type="PhylomeDB" id="P52850"/>
<dbReference type="TreeFam" id="TF313193"/>
<dbReference type="BRENDA" id="2.8.2.8">
    <property type="organism ID" value="3474"/>
</dbReference>
<dbReference type="Reactome" id="R-MMU-2022928">
    <property type="pathway name" value="HS-GAG biosynthesis"/>
</dbReference>
<dbReference type="UniPathway" id="UPA00756"/>
<dbReference type="UniPathway" id="UPA00862"/>
<dbReference type="BioGRID-ORCS" id="17423">
    <property type="hits" value="6 hits in 76 CRISPR screens"/>
</dbReference>
<dbReference type="ChiTaRS" id="Ndst2">
    <property type="organism name" value="mouse"/>
</dbReference>
<dbReference type="PRO" id="PR:P52850"/>
<dbReference type="Proteomes" id="UP000000589">
    <property type="component" value="Chromosome 14"/>
</dbReference>
<dbReference type="RNAct" id="P52850">
    <property type="molecule type" value="protein"/>
</dbReference>
<dbReference type="Bgee" id="ENSMUSG00000039308">
    <property type="expression patterns" value="Expressed in retinal neural layer and 218 other cell types or tissues"/>
</dbReference>
<dbReference type="ExpressionAtlas" id="P52850">
    <property type="expression patterns" value="baseline and differential"/>
</dbReference>
<dbReference type="GO" id="GO:0005794">
    <property type="term" value="C:Golgi apparatus"/>
    <property type="evidence" value="ECO:0000314"/>
    <property type="project" value="BHF-UCL"/>
</dbReference>
<dbReference type="GO" id="GO:0000139">
    <property type="term" value="C:Golgi membrane"/>
    <property type="evidence" value="ECO:0007669"/>
    <property type="project" value="UniProtKB-SubCell"/>
</dbReference>
<dbReference type="GO" id="GO:0019213">
    <property type="term" value="F:deacetylase activity"/>
    <property type="evidence" value="ECO:0000314"/>
    <property type="project" value="MGI"/>
</dbReference>
<dbReference type="GO" id="GO:0102140">
    <property type="term" value="F:heparan sulfate N-deacetylase activity"/>
    <property type="evidence" value="ECO:0000314"/>
    <property type="project" value="UniProtKB"/>
</dbReference>
<dbReference type="GO" id="GO:0015016">
    <property type="term" value="F:heparan sulfate N-sulfotransferase activity"/>
    <property type="evidence" value="ECO:0000314"/>
    <property type="project" value="UniProtKB"/>
</dbReference>
<dbReference type="GO" id="GO:0050119">
    <property type="term" value="F:N-acetylglucosamine deacetylase activity"/>
    <property type="evidence" value="ECO:0000314"/>
    <property type="project" value="MGI"/>
</dbReference>
<dbReference type="GO" id="GO:0008146">
    <property type="term" value="F:sulfotransferase activity"/>
    <property type="evidence" value="ECO:0000314"/>
    <property type="project" value="MGI"/>
</dbReference>
<dbReference type="GO" id="GO:0006024">
    <property type="term" value="P:glycosaminoglycan biosynthetic process"/>
    <property type="evidence" value="ECO:0000304"/>
    <property type="project" value="MGI"/>
</dbReference>
<dbReference type="GO" id="GO:0015012">
    <property type="term" value="P:heparan sulfate proteoglycan biosynthetic process"/>
    <property type="evidence" value="ECO:0000314"/>
    <property type="project" value="UniProtKB"/>
</dbReference>
<dbReference type="GO" id="GO:0030210">
    <property type="term" value="P:heparin proteoglycan biosynthetic process"/>
    <property type="evidence" value="ECO:0007669"/>
    <property type="project" value="UniProtKB-UniPathway"/>
</dbReference>
<dbReference type="GO" id="GO:0002448">
    <property type="term" value="P:mast cell mediated immunity"/>
    <property type="evidence" value="ECO:0000315"/>
    <property type="project" value="MGI"/>
</dbReference>
<dbReference type="GO" id="GO:0002002">
    <property type="term" value="P:regulation of angiotensin levels in blood"/>
    <property type="evidence" value="ECO:0000315"/>
    <property type="project" value="MGI"/>
</dbReference>
<dbReference type="FunFam" id="3.40.50.300:FF:000176">
    <property type="entry name" value="bifunctional heparan sulfate N-deacetylase/N-sulfotransferase 1"/>
    <property type="match status" value="1"/>
</dbReference>
<dbReference type="Gene3D" id="3.40.50.300">
    <property type="entry name" value="P-loop containing nucleotide triphosphate hydrolases"/>
    <property type="match status" value="1"/>
</dbReference>
<dbReference type="InterPro" id="IPR021930">
    <property type="entry name" value="Heparan_SO4_deacetylase_dom"/>
</dbReference>
<dbReference type="InterPro" id="IPR056793">
    <property type="entry name" value="HSNSD_N"/>
</dbReference>
<dbReference type="InterPro" id="IPR037359">
    <property type="entry name" value="NST/OST"/>
</dbReference>
<dbReference type="InterPro" id="IPR027417">
    <property type="entry name" value="P-loop_NTPase"/>
</dbReference>
<dbReference type="InterPro" id="IPR000863">
    <property type="entry name" value="Sulfotransferase_dom"/>
</dbReference>
<dbReference type="PANTHER" id="PTHR10605:SF53">
    <property type="entry name" value="BIFUNCTIONAL HEPARAN SULFATE N-DEACETYLASE_N-SULFOTRANSFERASE 2"/>
    <property type="match status" value="1"/>
</dbReference>
<dbReference type="PANTHER" id="PTHR10605">
    <property type="entry name" value="HEPARAN SULFATE SULFOTRANSFERASE"/>
    <property type="match status" value="1"/>
</dbReference>
<dbReference type="Pfam" id="PF12062">
    <property type="entry name" value="HSNSD-CE"/>
    <property type="match status" value="1"/>
</dbReference>
<dbReference type="Pfam" id="PF25119">
    <property type="entry name" value="HSNSD_N"/>
    <property type="match status" value="1"/>
</dbReference>
<dbReference type="Pfam" id="PF00685">
    <property type="entry name" value="Sulfotransfer_1"/>
    <property type="match status" value="1"/>
</dbReference>
<dbReference type="SUPFAM" id="SSF52540">
    <property type="entry name" value="P-loop containing nucleoside triphosphate hydrolases"/>
    <property type="match status" value="1"/>
</dbReference>
<protein>
    <recommendedName>
        <fullName>Bifunctional heparan sulfate N-deacetylase/N-sulfotransferase 2</fullName>
        <ecNumber>2.8.2.8</ecNumber>
    </recommendedName>
    <alternativeName>
        <fullName>Glucosaminyl N-deacetylase/N-sulfotransferase 2</fullName>
        <shortName>NDST-2</shortName>
    </alternativeName>
    <alternativeName>
        <fullName>Mndns</fullName>
    </alternativeName>
    <alternativeName>
        <fullName>N-heparan sulfate sulfotransferase 2</fullName>
        <shortName>N-HSST 2</shortName>
    </alternativeName>
    <domain>
        <recommendedName>
            <fullName>Heparan sulfate N-deacetylase 2</fullName>
            <ecNumber>3.-.-.-</ecNumber>
        </recommendedName>
    </domain>
    <domain>
        <recommendedName>
            <fullName>Heparan sulfate N-sulfotransferase 2</fullName>
            <ecNumber>2.8.2.-</ecNumber>
        </recommendedName>
    </domain>
</protein>
<gene>
    <name type="primary">Ndst2</name>
    <name type="synonym">Hsst2</name>
</gene>
<evidence type="ECO:0000250" key="1"/>
<evidence type="ECO:0000250" key="2">
    <source>
        <dbReference type="UniProtKB" id="P52849"/>
    </source>
</evidence>
<evidence type="ECO:0000255" key="3"/>
<evidence type="ECO:0000256" key="4">
    <source>
        <dbReference type="SAM" id="MobiDB-lite"/>
    </source>
</evidence>
<evidence type="ECO:0000269" key="5">
    <source>
    </source>
</evidence>
<evidence type="ECO:0000269" key="6">
    <source>
    </source>
</evidence>
<evidence type="ECO:0000305" key="7"/>
<reference key="1">
    <citation type="journal article" date="1994" name="J. Biol. Chem.">
        <title>Molecular cloning and expression of a glycosaminoglycan N-acetylglucosaminyl N-deacetylase/N-sulfotransferase from a heparin-producing cell line.</title>
        <authorList>
            <person name="Orellana A."/>
            <person name="Hirschberg C.B."/>
            <person name="Wei Z."/>
            <person name="Swiedler S.J."/>
            <person name="Ishihara M."/>
        </authorList>
    </citation>
    <scope>NUCLEOTIDE SEQUENCE [MRNA]</scope>
    <source>
        <strain>LAF1</strain>
    </source>
</reference>
<reference key="2">
    <citation type="journal article" date="1994" name="J. Biol. Chem.">
        <title>cDNA cloning and sequencing of mouse mastocytoma glucosaminyl N-deacetylase/N-sulfotransferase, an enzyme involved in the biosynthesis of heparin.</title>
        <authorList>
            <person name="Eriksson I."/>
            <person name="Sandbaeck D."/>
            <person name="Ek B."/>
            <person name="Lindahl U."/>
            <person name="Kjellen L."/>
        </authorList>
    </citation>
    <scope>NUCLEOTIDE SEQUENCE [MRNA]</scope>
    <scope>PROTEIN SEQUENCE OF 360-375; 568-580; 697-710 AND 813-823</scope>
    <source>
        <strain>Leaden X A1</strain>
    </source>
</reference>
<reference key="3">
    <citation type="journal article" date="2001" name="J. Biol. Chem.">
        <title>Multiple isozymes of heparan sulfate/heparin GlcNAc N-deacetylase/GlcN N-sulfotransferase. Structure and activity of the fourth member, NDST4.</title>
        <authorList>
            <person name="Aikawa J."/>
            <person name="Grobe K."/>
            <person name="Tsujimoto M."/>
            <person name="Esko J.D."/>
        </authorList>
    </citation>
    <scope>NUCLEOTIDE SEQUENCE [MRNA]</scope>
    <source>
        <strain>BALB/cJ</strain>
        <tissue>Lung</tissue>
    </source>
</reference>
<reference key="4">
    <citation type="journal article" date="2005" name="Science">
        <title>The transcriptional landscape of the mammalian genome.</title>
        <authorList>
            <person name="Carninci P."/>
            <person name="Kasukawa T."/>
            <person name="Katayama S."/>
            <person name="Gough J."/>
            <person name="Frith M.C."/>
            <person name="Maeda N."/>
            <person name="Oyama R."/>
            <person name="Ravasi T."/>
            <person name="Lenhard B."/>
            <person name="Wells C."/>
            <person name="Kodzius R."/>
            <person name="Shimokawa K."/>
            <person name="Bajic V.B."/>
            <person name="Brenner S.E."/>
            <person name="Batalov S."/>
            <person name="Forrest A.R."/>
            <person name="Zavolan M."/>
            <person name="Davis M.J."/>
            <person name="Wilming L.G."/>
            <person name="Aidinis V."/>
            <person name="Allen J.E."/>
            <person name="Ambesi-Impiombato A."/>
            <person name="Apweiler R."/>
            <person name="Aturaliya R.N."/>
            <person name="Bailey T.L."/>
            <person name="Bansal M."/>
            <person name="Baxter L."/>
            <person name="Beisel K.W."/>
            <person name="Bersano T."/>
            <person name="Bono H."/>
            <person name="Chalk A.M."/>
            <person name="Chiu K.P."/>
            <person name="Choudhary V."/>
            <person name="Christoffels A."/>
            <person name="Clutterbuck D.R."/>
            <person name="Crowe M.L."/>
            <person name="Dalla E."/>
            <person name="Dalrymple B.P."/>
            <person name="de Bono B."/>
            <person name="Della Gatta G."/>
            <person name="di Bernardo D."/>
            <person name="Down T."/>
            <person name="Engstrom P."/>
            <person name="Fagiolini M."/>
            <person name="Faulkner G."/>
            <person name="Fletcher C.F."/>
            <person name="Fukushima T."/>
            <person name="Furuno M."/>
            <person name="Futaki S."/>
            <person name="Gariboldi M."/>
            <person name="Georgii-Hemming P."/>
            <person name="Gingeras T.R."/>
            <person name="Gojobori T."/>
            <person name="Green R.E."/>
            <person name="Gustincich S."/>
            <person name="Harbers M."/>
            <person name="Hayashi Y."/>
            <person name="Hensch T.K."/>
            <person name="Hirokawa N."/>
            <person name="Hill D."/>
            <person name="Huminiecki L."/>
            <person name="Iacono M."/>
            <person name="Ikeo K."/>
            <person name="Iwama A."/>
            <person name="Ishikawa T."/>
            <person name="Jakt M."/>
            <person name="Kanapin A."/>
            <person name="Katoh M."/>
            <person name="Kawasawa Y."/>
            <person name="Kelso J."/>
            <person name="Kitamura H."/>
            <person name="Kitano H."/>
            <person name="Kollias G."/>
            <person name="Krishnan S.P."/>
            <person name="Kruger A."/>
            <person name="Kummerfeld S.K."/>
            <person name="Kurochkin I.V."/>
            <person name="Lareau L.F."/>
            <person name="Lazarevic D."/>
            <person name="Lipovich L."/>
            <person name="Liu J."/>
            <person name="Liuni S."/>
            <person name="McWilliam S."/>
            <person name="Madan Babu M."/>
            <person name="Madera M."/>
            <person name="Marchionni L."/>
            <person name="Matsuda H."/>
            <person name="Matsuzawa S."/>
            <person name="Miki H."/>
            <person name="Mignone F."/>
            <person name="Miyake S."/>
            <person name="Morris K."/>
            <person name="Mottagui-Tabar S."/>
            <person name="Mulder N."/>
            <person name="Nakano N."/>
            <person name="Nakauchi H."/>
            <person name="Ng P."/>
            <person name="Nilsson R."/>
            <person name="Nishiguchi S."/>
            <person name="Nishikawa S."/>
            <person name="Nori F."/>
            <person name="Ohara O."/>
            <person name="Okazaki Y."/>
            <person name="Orlando V."/>
            <person name="Pang K.C."/>
            <person name="Pavan W.J."/>
            <person name="Pavesi G."/>
            <person name="Pesole G."/>
            <person name="Petrovsky N."/>
            <person name="Piazza S."/>
            <person name="Reed J."/>
            <person name="Reid J.F."/>
            <person name="Ring B.Z."/>
            <person name="Ringwald M."/>
            <person name="Rost B."/>
            <person name="Ruan Y."/>
            <person name="Salzberg S.L."/>
            <person name="Sandelin A."/>
            <person name="Schneider C."/>
            <person name="Schoenbach C."/>
            <person name="Sekiguchi K."/>
            <person name="Semple C.A."/>
            <person name="Seno S."/>
            <person name="Sessa L."/>
            <person name="Sheng Y."/>
            <person name="Shibata Y."/>
            <person name="Shimada H."/>
            <person name="Shimada K."/>
            <person name="Silva D."/>
            <person name="Sinclair B."/>
            <person name="Sperling S."/>
            <person name="Stupka E."/>
            <person name="Sugiura K."/>
            <person name="Sultana R."/>
            <person name="Takenaka Y."/>
            <person name="Taki K."/>
            <person name="Tammoja K."/>
            <person name="Tan S.L."/>
            <person name="Tang S."/>
            <person name="Taylor M.S."/>
            <person name="Tegner J."/>
            <person name="Teichmann S.A."/>
            <person name="Ueda H.R."/>
            <person name="van Nimwegen E."/>
            <person name="Verardo R."/>
            <person name="Wei C.L."/>
            <person name="Yagi K."/>
            <person name="Yamanishi H."/>
            <person name="Zabarovsky E."/>
            <person name="Zhu S."/>
            <person name="Zimmer A."/>
            <person name="Hide W."/>
            <person name="Bult C."/>
            <person name="Grimmond S.M."/>
            <person name="Teasdale R.D."/>
            <person name="Liu E.T."/>
            <person name="Brusic V."/>
            <person name="Quackenbush J."/>
            <person name="Wahlestedt C."/>
            <person name="Mattick J.S."/>
            <person name="Hume D.A."/>
            <person name="Kai C."/>
            <person name="Sasaki D."/>
            <person name="Tomaru Y."/>
            <person name="Fukuda S."/>
            <person name="Kanamori-Katayama M."/>
            <person name="Suzuki M."/>
            <person name="Aoki J."/>
            <person name="Arakawa T."/>
            <person name="Iida J."/>
            <person name="Imamura K."/>
            <person name="Itoh M."/>
            <person name="Kato T."/>
            <person name="Kawaji H."/>
            <person name="Kawagashira N."/>
            <person name="Kawashima T."/>
            <person name="Kojima M."/>
            <person name="Kondo S."/>
            <person name="Konno H."/>
            <person name="Nakano K."/>
            <person name="Ninomiya N."/>
            <person name="Nishio T."/>
            <person name="Okada M."/>
            <person name="Plessy C."/>
            <person name="Shibata K."/>
            <person name="Shiraki T."/>
            <person name="Suzuki S."/>
            <person name="Tagami M."/>
            <person name="Waki K."/>
            <person name="Watahiki A."/>
            <person name="Okamura-Oho Y."/>
            <person name="Suzuki H."/>
            <person name="Kawai J."/>
            <person name="Hayashizaki Y."/>
        </authorList>
    </citation>
    <scope>NUCLEOTIDE SEQUENCE [LARGE SCALE MRNA]</scope>
    <source>
        <strain>C57BL/6J</strain>
        <tissue>Bone marrow</tissue>
    </source>
</reference>
<reference key="5">
    <citation type="journal article" date="2004" name="Genome Res.">
        <title>The status, quality, and expansion of the NIH full-length cDNA project: the Mammalian Gene Collection (MGC).</title>
        <authorList>
            <consortium name="The MGC Project Team"/>
        </authorList>
    </citation>
    <scope>NUCLEOTIDE SEQUENCE [LARGE SCALE MRNA]</scope>
</reference>
<reference key="6">
    <citation type="journal article" date="1999" name="Nature">
        <title>Heparin is essential for the storage of specific granule proteases in mast cells.</title>
        <authorList>
            <person name="Humphries D.E."/>
            <person name="Wong G.W."/>
            <person name="Friend D.S."/>
            <person name="Gurish M.F."/>
            <person name="Qiu W.-T."/>
            <person name="Huang C."/>
            <person name="Sharpe A.H."/>
            <person name="Stevens R.L."/>
        </authorList>
    </citation>
    <scope>FUNCTION</scope>
    <scope>DISRUPTION PHENOTYPE</scope>
</reference>
<reference key="7">
    <citation type="journal article" date="1999" name="Nature">
        <title>Abnormal mast cells in mice deficient in a heparin-synthesizing enzyme.</title>
        <authorList>
            <person name="Forsberg E."/>
            <person name="Pejler G."/>
            <person name="Ringvall M."/>
            <person name="Lunderius C."/>
            <person name="Tomasini-Johansson B."/>
            <person name="Kusche-Gullberg M."/>
            <person name="Eriksson I."/>
            <person name="Ledin J."/>
            <person name="Hellman L."/>
            <person name="Kjellen L."/>
        </authorList>
    </citation>
    <scope>FUNCTION</scope>
    <scope>DISRUPTION PHENOTYPE</scope>
</reference>
<name>NDST2_MOUSE</name>